<dbReference type="EMBL" id="BA000001">
    <property type="protein sequence ID" value="BAA30746.1"/>
    <property type="molecule type" value="Genomic_DNA"/>
</dbReference>
<dbReference type="PIR" id="B71043">
    <property type="entry name" value="B71043"/>
</dbReference>
<dbReference type="RefSeq" id="WP_010885705.1">
    <property type="nucleotide sequence ID" value="NC_000961.1"/>
</dbReference>
<dbReference type="PDB" id="1J3A">
    <property type="method" value="X-ray"/>
    <property type="resolution" value="1.60 A"/>
    <property type="chains" value="A=1-142"/>
</dbReference>
<dbReference type="PDBsum" id="1J3A"/>
<dbReference type="SMR" id="O59300"/>
<dbReference type="STRING" id="70601.gene:9378625"/>
<dbReference type="EnsemblBacteria" id="BAA30746">
    <property type="protein sequence ID" value="BAA30746"/>
    <property type="gene ID" value="BAA30746"/>
</dbReference>
<dbReference type="GeneID" id="1442485"/>
<dbReference type="KEGG" id="pho:PH1634"/>
<dbReference type="eggNOG" id="arCOG04242">
    <property type="taxonomic scope" value="Archaea"/>
</dbReference>
<dbReference type="OrthoDB" id="7668at2157"/>
<dbReference type="EvolutionaryTrace" id="O59300"/>
<dbReference type="Proteomes" id="UP000000752">
    <property type="component" value="Chromosome"/>
</dbReference>
<dbReference type="GO" id="GO:0022625">
    <property type="term" value="C:cytosolic large ribosomal subunit"/>
    <property type="evidence" value="ECO:0007669"/>
    <property type="project" value="TreeGrafter"/>
</dbReference>
<dbReference type="GO" id="GO:0003729">
    <property type="term" value="F:mRNA binding"/>
    <property type="evidence" value="ECO:0007669"/>
    <property type="project" value="TreeGrafter"/>
</dbReference>
<dbReference type="GO" id="GO:0003735">
    <property type="term" value="F:structural constituent of ribosome"/>
    <property type="evidence" value="ECO:0007669"/>
    <property type="project" value="InterPro"/>
</dbReference>
<dbReference type="GO" id="GO:0017148">
    <property type="term" value="P:negative regulation of translation"/>
    <property type="evidence" value="ECO:0007669"/>
    <property type="project" value="TreeGrafter"/>
</dbReference>
<dbReference type="GO" id="GO:0006412">
    <property type="term" value="P:translation"/>
    <property type="evidence" value="ECO:0007669"/>
    <property type="project" value="UniProtKB-UniRule"/>
</dbReference>
<dbReference type="FunFam" id="3.90.1180.10:FF:000012">
    <property type="entry name" value="50S ribosomal protein L13"/>
    <property type="match status" value="1"/>
</dbReference>
<dbReference type="Gene3D" id="3.90.1180.10">
    <property type="entry name" value="Ribosomal protein L13"/>
    <property type="match status" value="1"/>
</dbReference>
<dbReference type="HAMAP" id="MF_01366">
    <property type="entry name" value="Ribosomal_uL13"/>
    <property type="match status" value="1"/>
</dbReference>
<dbReference type="InterPro" id="IPR005822">
    <property type="entry name" value="Ribosomal_uL13"/>
</dbReference>
<dbReference type="InterPro" id="IPR005823">
    <property type="entry name" value="Ribosomal_uL13_bac-type"/>
</dbReference>
<dbReference type="InterPro" id="IPR023563">
    <property type="entry name" value="Ribosomal_uL13_CS"/>
</dbReference>
<dbReference type="InterPro" id="IPR005755">
    <property type="entry name" value="Ribosomal_uL13_euk/arc"/>
</dbReference>
<dbReference type="InterPro" id="IPR036899">
    <property type="entry name" value="Ribosomal_uL13_sf"/>
</dbReference>
<dbReference type="NCBIfam" id="TIGR01077">
    <property type="entry name" value="L13_A_E"/>
    <property type="match status" value="1"/>
</dbReference>
<dbReference type="NCBIfam" id="NF005004">
    <property type="entry name" value="PRK06394.1"/>
    <property type="match status" value="1"/>
</dbReference>
<dbReference type="PANTHER" id="PTHR11545:SF3">
    <property type="entry name" value="LARGE RIBOSOMAL SUBUNIT PROTEIN UL13"/>
    <property type="match status" value="1"/>
</dbReference>
<dbReference type="PANTHER" id="PTHR11545">
    <property type="entry name" value="RIBOSOMAL PROTEIN L13"/>
    <property type="match status" value="1"/>
</dbReference>
<dbReference type="Pfam" id="PF00572">
    <property type="entry name" value="Ribosomal_L13"/>
    <property type="match status" value="1"/>
</dbReference>
<dbReference type="PIRSF" id="PIRSF002181">
    <property type="entry name" value="Ribosomal_L13"/>
    <property type="match status" value="1"/>
</dbReference>
<dbReference type="SUPFAM" id="SSF52161">
    <property type="entry name" value="Ribosomal protein L13"/>
    <property type="match status" value="1"/>
</dbReference>
<dbReference type="PROSITE" id="PS00783">
    <property type="entry name" value="RIBOSOMAL_L13"/>
    <property type="match status" value="1"/>
</dbReference>
<keyword id="KW-0002">3D-structure</keyword>
<keyword id="KW-0687">Ribonucleoprotein</keyword>
<keyword id="KW-0689">Ribosomal protein</keyword>
<comment type="function">
    <text evidence="1">This protein is one of the early assembly proteins of the 50S ribosomal subunit, although it is not seen to bind rRNA by itself. It is important during the early stages of 50S assembly.</text>
</comment>
<comment type="subunit">
    <text evidence="1">Part of the 50S ribosomal subunit.</text>
</comment>
<comment type="similarity">
    <text evidence="1">Belongs to the universal ribosomal protein uL13 family.</text>
</comment>
<sequence>MRIINADGLILGRLASRVAKMLLEGEEVVIVNAEKAVITGNREVIFSKYKQRTGLRTLTNPRRGPFYPKRSDEIVRRTIRGMLPWKTDRGRKAFRRLKVYVGIPKEFQDKQLETIVEAHVSRLSRPKYVTVGEVAKFLGGKF</sequence>
<gene>
    <name evidence="1" type="primary">rpl13</name>
    <name type="ordered locus">PH1634</name>
</gene>
<evidence type="ECO:0000255" key="1">
    <source>
        <dbReference type="HAMAP-Rule" id="MF_01366"/>
    </source>
</evidence>
<evidence type="ECO:0000305" key="2"/>
<evidence type="ECO:0007829" key="3">
    <source>
        <dbReference type="PDB" id="1J3A"/>
    </source>
</evidence>
<protein>
    <recommendedName>
        <fullName evidence="1">Large ribosomal subunit protein uL13</fullName>
    </recommendedName>
    <alternativeName>
        <fullName evidence="2">50S ribosomal protein L13</fullName>
    </alternativeName>
</protein>
<name>RL13_PYRHO</name>
<feature type="chain" id="PRO_0000133763" description="Large ribosomal subunit protein uL13">
    <location>
        <begin position="1"/>
        <end position="142"/>
    </location>
</feature>
<feature type="strand" evidence="3">
    <location>
        <begin position="2"/>
        <end position="5"/>
    </location>
</feature>
<feature type="helix" evidence="3">
    <location>
        <begin position="11"/>
        <end position="23"/>
    </location>
</feature>
<feature type="strand" evidence="3">
    <location>
        <begin position="28"/>
        <end position="31"/>
    </location>
</feature>
<feature type="helix" evidence="3">
    <location>
        <begin position="33"/>
        <end position="35"/>
    </location>
</feature>
<feature type="strand" evidence="3">
    <location>
        <begin position="37"/>
        <end position="40"/>
    </location>
</feature>
<feature type="helix" evidence="3">
    <location>
        <begin position="42"/>
        <end position="52"/>
    </location>
</feature>
<feature type="helix" evidence="3">
    <location>
        <begin position="71"/>
        <end position="80"/>
    </location>
</feature>
<feature type="turn" evidence="3">
    <location>
        <begin position="81"/>
        <end position="86"/>
    </location>
</feature>
<feature type="helix" evidence="3">
    <location>
        <begin position="88"/>
        <end position="94"/>
    </location>
</feature>
<feature type="strand" evidence="3">
    <location>
        <begin position="97"/>
        <end position="99"/>
    </location>
</feature>
<feature type="helix" evidence="3">
    <location>
        <begin position="105"/>
        <end position="107"/>
    </location>
</feature>
<feature type="helix" evidence="3">
    <location>
        <begin position="116"/>
        <end position="118"/>
    </location>
</feature>
<feature type="helix" evidence="3">
    <location>
        <begin position="120"/>
        <end position="122"/>
    </location>
</feature>
<feature type="strand" evidence="3">
    <location>
        <begin position="123"/>
        <end position="125"/>
    </location>
</feature>
<feature type="strand" evidence="3">
    <location>
        <begin position="128"/>
        <end position="130"/>
    </location>
</feature>
<feature type="helix" evidence="3">
    <location>
        <begin position="131"/>
        <end position="138"/>
    </location>
</feature>
<reference key="1">
    <citation type="journal article" date="1998" name="DNA Res.">
        <title>Complete sequence and gene organization of the genome of a hyper-thermophilic archaebacterium, Pyrococcus horikoshii OT3.</title>
        <authorList>
            <person name="Kawarabayasi Y."/>
            <person name="Sawada M."/>
            <person name="Horikawa H."/>
            <person name="Haikawa Y."/>
            <person name="Hino Y."/>
            <person name="Yamamoto S."/>
            <person name="Sekine M."/>
            <person name="Baba S."/>
            <person name="Kosugi H."/>
            <person name="Hosoyama A."/>
            <person name="Nagai Y."/>
            <person name="Sakai M."/>
            <person name="Ogura K."/>
            <person name="Otsuka R."/>
            <person name="Nakazawa H."/>
            <person name="Takamiya M."/>
            <person name="Ohfuku Y."/>
            <person name="Funahashi T."/>
            <person name="Tanaka T."/>
            <person name="Kudoh Y."/>
            <person name="Yamazaki J."/>
            <person name="Kushida N."/>
            <person name="Oguchi A."/>
            <person name="Aoki K."/>
            <person name="Yoshizawa T."/>
            <person name="Nakamura Y."/>
            <person name="Robb F.T."/>
            <person name="Horikoshi K."/>
            <person name="Masuchi Y."/>
            <person name="Shizuya H."/>
            <person name="Kikuchi H."/>
        </authorList>
    </citation>
    <scope>NUCLEOTIDE SEQUENCE [LARGE SCALE GENOMIC DNA]</scope>
    <source>
        <strain>ATCC 700860 / DSM 12428 / JCM 9974 / NBRC 100139 / OT-3</strain>
    </source>
</reference>
<reference key="2">
    <citation type="submission" date="2003-02" db="PDB data bank">
        <title>Crystal structure of ribosomal protein L13 from hyperthermophilic archaeon Pyrococcus horikoshii.</title>
        <authorList>
            <person name="Nakashima T."/>
            <person name="Tanaka M."/>
            <person name="Kazama T."/>
            <person name="Kawamura S."/>
            <person name="Kimura M."/>
            <person name="Yao M."/>
            <person name="Tanaka I."/>
        </authorList>
    </citation>
    <scope>X-RAY CRYSTALLOGRAPHY (1.6 ANGSTROMS)</scope>
</reference>
<organism>
    <name type="scientific">Pyrococcus horikoshii (strain ATCC 700860 / DSM 12428 / JCM 9974 / NBRC 100139 / OT-3)</name>
    <dbReference type="NCBI Taxonomy" id="70601"/>
    <lineage>
        <taxon>Archaea</taxon>
        <taxon>Methanobacteriati</taxon>
        <taxon>Methanobacteriota</taxon>
        <taxon>Thermococci</taxon>
        <taxon>Thermococcales</taxon>
        <taxon>Thermococcaceae</taxon>
        <taxon>Pyrococcus</taxon>
    </lineage>
</organism>
<proteinExistence type="evidence at protein level"/>
<accession>O59300</accession>